<comment type="catalytic activity">
    <reaction evidence="1">
        <text>beta-D-fructose 1,6-bisphosphate + H2O = beta-D-fructose 6-phosphate + phosphate</text>
        <dbReference type="Rhea" id="RHEA:11064"/>
        <dbReference type="ChEBI" id="CHEBI:15377"/>
        <dbReference type="ChEBI" id="CHEBI:32966"/>
        <dbReference type="ChEBI" id="CHEBI:43474"/>
        <dbReference type="ChEBI" id="CHEBI:57634"/>
        <dbReference type="EC" id="3.1.3.11"/>
    </reaction>
</comment>
<comment type="cofactor">
    <cofactor evidence="1">
        <name>Mg(2+)</name>
        <dbReference type="ChEBI" id="CHEBI:18420"/>
    </cofactor>
    <text evidence="1">Binds 2 magnesium ions per subunit.</text>
</comment>
<comment type="pathway">
    <text evidence="1">Carbohydrate biosynthesis; gluconeogenesis.</text>
</comment>
<comment type="subunit">
    <text evidence="1">Homotetramer.</text>
</comment>
<comment type="subcellular location">
    <subcellularLocation>
        <location evidence="1">Cytoplasm</location>
    </subcellularLocation>
</comment>
<comment type="similarity">
    <text evidence="1">Belongs to the FBPase class 1 family.</text>
</comment>
<proteinExistence type="inferred from homology"/>
<name>F16PA_BRUSU</name>
<evidence type="ECO:0000255" key="1">
    <source>
        <dbReference type="HAMAP-Rule" id="MF_01855"/>
    </source>
</evidence>
<reference key="1">
    <citation type="journal article" date="2002" name="Proc. Natl. Acad. Sci. U.S.A.">
        <title>The Brucella suis genome reveals fundamental similarities between animal and plant pathogens and symbionts.</title>
        <authorList>
            <person name="Paulsen I.T."/>
            <person name="Seshadri R."/>
            <person name="Nelson K.E."/>
            <person name="Eisen J.A."/>
            <person name="Heidelberg J.F."/>
            <person name="Read T.D."/>
            <person name="Dodson R.J."/>
            <person name="Umayam L.A."/>
            <person name="Brinkac L.M."/>
            <person name="Beanan M.J."/>
            <person name="Daugherty S.C."/>
            <person name="DeBoy R.T."/>
            <person name="Durkin A.S."/>
            <person name="Kolonay J.F."/>
            <person name="Madupu R."/>
            <person name="Nelson W.C."/>
            <person name="Ayodeji B."/>
            <person name="Kraul M."/>
            <person name="Shetty J."/>
            <person name="Malek J.A."/>
            <person name="Van Aken S.E."/>
            <person name="Riedmuller S."/>
            <person name="Tettelin H."/>
            <person name="Gill S.R."/>
            <person name="White O."/>
            <person name="Salzberg S.L."/>
            <person name="Hoover D.L."/>
            <person name="Lindler L.E."/>
            <person name="Halling S.M."/>
            <person name="Boyle S.M."/>
            <person name="Fraser C.M."/>
        </authorList>
    </citation>
    <scope>NUCLEOTIDE SEQUENCE [LARGE SCALE GENOMIC DNA]</scope>
    <source>
        <strain>1330</strain>
    </source>
</reference>
<reference key="2">
    <citation type="journal article" date="2011" name="J. Bacteriol.">
        <title>Revised genome sequence of Brucella suis 1330.</title>
        <authorList>
            <person name="Tae H."/>
            <person name="Shallom S."/>
            <person name="Settlage R."/>
            <person name="Preston D."/>
            <person name="Adams L.G."/>
            <person name="Garner H.R."/>
        </authorList>
    </citation>
    <scope>NUCLEOTIDE SEQUENCE [LARGE SCALE GENOMIC DNA]</scope>
    <source>
        <strain>1330</strain>
    </source>
</reference>
<organism>
    <name type="scientific">Brucella suis biovar 1 (strain 1330)</name>
    <dbReference type="NCBI Taxonomy" id="204722"/>
    <lineage>
        <taxon>Bacteria</taxon>
        <taxon>Pseudomonadati</taxon>
        <taxon>Pseudomonadota</taxon>
        <taxon>Alphaproteobacteria</taxon>
        <taxon>Hyphomicrobiales</taxon>
        <taxon>Brucellaceae</taxon>
        <taxon>Brucella/Ochrobactrum group</taxon>
        <taxon>Brucella</taxon>
    </lineage>
</organism>
<dbReference type="EC" id="3.1.3.11" evidence="1"/>
<dbReference type="EMBL" id="AE014292">
    <property type="protein sequence ID" value="AAN34045.1"/>
    <property type="molecule type" value="Genomic_DNA"/>
</dbReference>
<dbReference type="EMBL" id="CP002998">
    <property type="protein sequence ID" value="AEM20322.1"/>
    <property type="molecule type" value="Genomic_DNA"/>
</dbReference>
<dbReference type="RefSeq" id="WP_004690340.1">
    <property type="nucleotide sequence ID" value="NZ_KN046805.1"/>
</dbReference>
<dbReference type="SMR" id="Q8FVG9"/>
<dbReference type="GeneID" id="45053876"/>
<dbReference type="KEGG" id="bms:BRA0872"/>
<dbReference type="KEGG" id="bsi:BS1330_II0865"/>
<dbReference type="PATRIC" id="fig|204722.22.peg.2459"/>
<dbReference type="HOGENOM" id="CLU_039977_0_0_5"/>
<dbReference type="PhylomeDB" id="Q8FVG9"/>
<dbReference type="UniPathway" id="UPA00138"/>
<dbReference type="Proteomes" id="UP000007104">
    <property type="component" value="Chromosome II"/>
</dbReference>
<dbReference type="GO" id="GO:0005829">
    <property type="term" value="C:cytosol"/>
    <property type="evidence" value="ECO:0007669"/>
    <property type="project" value="TreeGrafter"/>
</dbReference>
<dbReference type="GO" id="GO:0042132">
    <property type="term" value="F:fructose 1,6-bisphosphate 1-phosphatase activity"/>
    <property type="evidence" value="ECO:0007669"/>
    <property type="project" value="UniProtKB-UniRule"/>
</dbReference>
<dbReference type="GO" id="GO:0000287">
    <property type="term" value="F:magnesium ion binding"/>
    <property type="evidence" value="ECO:0007669"/>
    <property type="project" value="UniProtKB-UniRule"/>
</dbReference>
<dbReference type="GO" id="GO:0030388">
    <property type="term" value="P:fructose 1,6-bisphosphate metabolic process"/>
    <property type="evidence" value="ECO:0007669"/>
    <property type="project" value="TreeGrafter"/>
</dbReference>
<dbReference type="GO" id="GO:0006002">
    <property type="term" value="P:fructose 6-phosphate metabolic process"/>
    <property type="evidence" value="ECO:0007669"/>
    <property type="project" value="TreeGrafter"/>
</dbReference>
<dbReference type="GO" id="GO:0006000">
    <property type="term" value="P:fructose metabolic process"/>
    <property type="evidence" value="ECO:0007669"/>
    <property type="project" value="TreeGrafter"/>
</dbReference>
<dbReference type="GO" id="GO:0006094">
    <property type="term" value="P:gluconeogenesis"/>
    <property type="evidence" value="ECO:0007669"/>
    <property type="project" value="UniProtKB-UniRule"/>
</dbReference>
<dbReference type="GO" id="GO:0005986">
    <property type="term" value="P:sucrose biosynthetic process"/>
    <property type="evidence" value="ECO:0007669"/>
    <property type="project" value="TreeGrafter"/>
</dbReference>
<dbReference type="CDD" id="cd00354">
    <property type="entry name" value="FBPase"/>
    <property type="match status" value="1"/>
</dbReference>
<dbReference type="Gene3D" id="3.40.190.80">
    <property type="match status" value="1"/>
</dbReference>
<dbReference type="Gene3D" id="3.30.540.10">
    <property type="entry name" value="Fructose-1,6-Bisphosphatase, subunit A, domain 1"/>
    <property type="match status" value="1"/>
</dbReference>
<dbReference type="HAMAP" id="MF_01855">
    <property type="entry name" value="FBPase_class1"/>
    <property type="match status" value="1"/>
</dbReference>
<dbReference type="InterPro" id="IPR044015">
    <property type="entry name" value="FBPase_C_dom"/>
</dbReference>
<dbReference type="InterPro" id="IPR000146">
    <property type="entry name" value="FBPase_class-1"/>
</dbReference>
<dbReference type="InterPro" id="IPR033391">
    <property type="entry name" value="FBPase_N"/>
</dbReference>
<dbReference type="InterPro" id="IPR028343">
    <property type="entry name" value="FBPtase"/>
</dbReference>
<dbReference type="InterPro" id="IPR020548">
    <property type="entry name" value="Fructose_bisphosphatase_AS"/>
</dbReference>
<dbReference type="NCBIfam" id="NF006780">
    <property type="entry name" value="PRK09293.1-4"/>
    <property type="match status" value="1"/>
</dbReference>
<dbReference type="PANTHER" id="PTHR11556">
    <property type="entry name" value="FRUCTOSE-1,6-BISPHOSPHATASE-RELATED"/>
    <property type="match status" value="1"/>
</dbReference>
<dbReference type="PANTHER" id="PTHR11556:SF35">
    <property type="entry name" value="SEDOHEPTULOSE-1,7-BISPHOSPHATASE, CHLOROPLASTIC"/>
    <property type="match status" value="1"/>
</dbReference>
<dbReference type="Pfam" id="PF00316">
    <property type="entry name" value="FBPase"/>
    <property type="match status" value="1"/>
</dbReference>
<dbReference type="Pfam" id="PF18913">
    <property type="entry name" value="FBPase_C"/>
    <property type="match status" value="1"/>
</dbReference>
<dbReference type="PIRSF" id="PIRSF500210">
    <property type="entry name" value="FBPtase"/>
    <property type="match status" value="1"/>
</dbReference>
<dbReference type="PIRSF" id="PIRSF000904">
    <property type="entry name" value="FBPtase_SBPase"/>
    <property type="match status" value="1"/>
</dbReference>
<dbReference type="PRINTS" id="PR00115">
    <property type="entry name" value="F16BPHPHTASE"/>
</dbReference>
<dbReference type="SUPFAM" id="SSF56655">
    <property type="entry name" value="Carbohydrate phosphatase"/>
    <property type="match status" value="1"/>
</dbReference>
<dbReference type="PROSITE" id="PS00124">
    <property type="entry name" value="FBPASE"/>
    <property type="match status" value="1"/>
</dbReference>
<sequence>MTLVGNFSPLVLVGDSDRVEAETVGAYLDGWAGHDKVRLATANAIKAILSGAGRLVGRIARGYLPGDPGKLVGVNSDQDQQKSIDVGSHNLFVELLIAAGVASILSEEADLPVAGKADGLVAVAIDPLDGSGNVGLGAPLGTIFSIFPADVEEPFLQPGNRQIAAGYVSYGNSVDLGFSVGEGVIFATLDPVSGQFHITRRNVKLPERTSDLAFNASVQRHLSAGMQAYVNDAFLGKDGPRGRNFNMRWLGAAVGDMHRIMQRGGLFFYVNDSRPGYEKGRLRLVYEANPIAFLAREAGGKATDGSRPILDIVPQTYHERSALVFGVAEELDILGEYFVK</sequence>
<accession>Q8FVG9</accession>
<accession>G0KDN4</accession>
<keyword id="KW-0119">Carbohydrate metabolism</keyword>
<keyword id="KW-0963">Cytoplasm</keyword>
<keyword id="KW-0378">Hydrolase</keyword>
<keyword id="KW-0460">Magnesium</keyword>
<keyword id="KW-0479">Metal-binding</keyword>
<protein>
    <recommendedName>
        <fullName evidence="1">Fructose-1,6-bisphosphatase class 1</fullName>
        <shortName evidence="1">FBPase class 1</shortName>
        <ecNumber evidence="1">3.1.3.11</ecNumber>
    </recommendedName>
    <alternativeName>
        <fullName evidence="1">D-fructose-1,6-bisphosphate 1-phosphohydrolase class 1</fullName>
    </alternativeName>
</protein>
<feature type="chain" id="PRO_0000364482" description="Fructose-1,6-bisphosphatase class 1">
    <location>
        <begin position="1"/>
        <end position="340"/>
    </location>
</feature>
<feature type="binding site" evidence="1">
    <location>
        <position position="107"/>
    </location>
    <ligand>
        <name>Mg(2+)</name>
        <dbReference type="ChEBI" id="CHEBI:18420"/>
        <label>1</label>
    </ligand>
</feature>
<feature type="binding site" evidence="1">
    <location>
        <position position="126"/>
    </location>
    <ligand>
        <name>Mg(2+)</name>
        <dbReference type="ChEBI" id="CHEBI:18420"/>
        <label>1</label>
    </ligand>
</feature>
<feature type="binding site" evidence="1">
    <location>
        <position position="126"/>
    </location>
    <ligand>
        <name>Mg(2+)</name>
        <dbReference type="ChEBI" id="CHEBI:18420"/>
        <label>2</label>
    </ligand>
</feature>
<feature type="binding site" evidence="1">
    <location>
        <position position="128"/>
    </location>
    <ligand>
        <name>Mg(2+)</name>
        <dbReference type="ChEBI" id="CHEBI:18420"/>
        <label>1</label>
    </ligand>
</feature>
<feature type="binding site" evidence="1">
    <location>
        <position position="129"/>
    </location>
    <ligand>
        <name>Mg(2+)</name>
        <dbReference type="ChEBI" id="CHEBI:18420"/>
        <label>2</label>
    </ligand>
</feature>
<feature type="binding site" evidence="1">
    <location>
        <position position="215"/>
    </location>
    <ligand>
        <name>substrate</name>
    </ligand>
</feature>
<feature type="binding site" evidence="1">
    <location>
        <position position="287"/>
    </location>
    <ligand>
        <name>Mg(2+)</name>
        <dbReference type="ChEBI" id="CHEBI:18420"/>
        <label>2</label>
    </ligand>
</feature>
<gene>
    <name evidence="1" type="primary">fbp</name>
    <name type="ordered locus">BRA0872</name>
    <name type="ordered locus">BS1330_II0865</name>
</gene>